<name>CCO_MYCTO</name>
<proteinExistence type="inferred from homology"/>
<comment type="function">
    <text evidence="1">Catalyzes the oxidative cleavage of several carotenoids and apocarotenoids in vitro.</text>
</comment>
<comment type="cofactor">
    <cofactor evidence="1">
        <name>Fe(2+)</name>
        <dbReference type="ChEBI" id="CHEBI:29033"/>
    </cofactor>
    <text evidence="1">Binds 1 Fe(2+) ion per subunit.</text>
</comment>
<comment type="similarity">
    <text evidence="2">Belongs to the carotenoid oxygenase family.</text>
</comment>
<feature type="chain" id="PRO_0000426906" description="Carotenoid cleavage oxygenase">
    <location>
        <begin position="1"/>
        <end position="501"/>
    </location>
</feature>
<feature type="binding site" evidence="1">
    <location>
        <position position="162"/>
    </location>
    <ligand>
        <name>Fe cation</name>
        <dbReference type="ChEBI" id="CHEBI:24875"/>
        <note>catalytic</note>
    </ligand>
</feature>
<feature type="binding site" evidence="1">
    <location>
        <position position="211"/>
    </location>
    <ligand>
        <name>Fe cation</name>
        <dbReference type="ChEBI" id="CHEBI:24875"/>
        <note>catalytic</note>
    </ligand>
</feature>
<feature type="binding site" evidence="1">
    <location>
        <position position="314"/>
    </location>
    <ligand>
        <name>Fe cation</name>
        <dbReference type="ChEBI" id="CHEBI:24875"/>
        <note>catalytic</note>
    </ligand>
</feature>
<feature type="binding site" evidence="1">
    <location>
        <position position="494"/>
    </location>
    <ligand>
        <name>Fe cation</name>
        <dbReference type="ChEBI" id="CHEBI:24875"/>
        <note>catalytic</note>
    </ligand>
</feature>
<accession>P9WPR4</accession>
<accession>F2GNJ3</accession>
<accession>L0T7C1</accession>
<accession>O06785</accession>
<accession>Q7D9H3</accession>
<reference key="1">
    <citation type="journal article" date="2002" name="J. Bacteriol.">
        <title>Whole-genome comparison of Mycobacterium tuberculosis clinical and laboratory strains.</title>
        <authorList>
            <person name="Fleischmann R.D."/>
            <person name="Alland D."/>
            <person name="Eisen J.A."/>
            <person name="Carpenter L."/>
            <person name="White O."/>
            <person name="Peterson J.D."/>
            <person name="DeBoy R.T."/>
            <person name="Dodson R.J."/>
            <person name="Gwinn M.L."/>
            <person name="Haft D.H."/>
            <person name="Hickey E.K."/>
            <person name="Kolonay J.F."/>
            <person name="Nelson W.C."/>
            <person name="Umayam L.A."/>
            <person name="Ermolaeva M.D."/>
            <person name="Salzberg S.L."/>
            <person name="Delcher A."/>
            <person name="Utterback T.R."/>
            <person name="Weidman J.F."/>
            <person name="Khouri H.M."/>
            <person name="Gill J."/>
            <person name="Mikula A."/>
            <person name="Bishai W."/>
            <person name="Jacobs W.R. Jr."/>
            <person name="Venter J.C."/>
            <person name="Fraser C.M."/>
        </authorList>
    </citation>
    <scope>NUCLEOTIDE SEQUENCE [LARGE SCALE GENOMIC DNA]</scope>
    <source>
        <strain>CDC 1551 / Oshkosh</strain>
    </source>
</reference>
<organism>
    <name type="scientific">Mycobacterium tuberculosis (strain CDC 1551 / Oshkosh)</name>
    <dbReference type="NCBI Taxonomy" id="83331"/>
    <lineage>
        <taxon>Bacteria</taxon>
        <taxon>Bacillati</taxon>
        <taxon>Actinomycetota</taxon>
        <taxon>Actinomycetes</taxon>
        <taxon>Mycobacteriales</taxon>
        <taxon>Mycobacteriaceae</taxon>
        <taxon>Mycobacterium</taxon>
        <taxon>Mycobacterium tuberculosis complex</taxon>
    </lineage>
</organism>
<dbReference type="EC" id="1.13.11.-"/>
<dbReference type="EMBL" id="AE000516">
    <property type="protein sequence ID" value="AAK44908.1"/>
    <property type="molecule type" value="Genomic_DNA"/>
</dbReference>
<dbReference type="PIR" id="A70534">
    <property type="entry name" value="A70534"/>
</dbReference>
<dbReference type="RefSeq" id="WP_003403360.1">
    <property type="nucleotide sequence ID" value="NZ_KK341227.1"/>
</dbReference>
<dbReference type="SMR" id="P9WPR4"/>
<dbReference type="KEGG" id="mtc:MT0683"/>
<dbReference type="PATRIC" id="fig|83331.31.peg.726"/>
<dbReference type="HOGENOM" id="CLU_016472_0_2_11"/>
<dbReference type="Proteomes" id="UP000001020">
    <property type="component" value="Chromosome"/>
</dbReference>
<dbReference type="GO" id="GO:0010436">
    <property type="term" value="F:carotenoid dioxygenase activity"/>
    <property type="evidence" value="ECO:0007669"/>
    <property type="project" value="TreeGrafter"/>
</dbReference>
<dbReference type="GO" id="GO:0046872">
    <property type="term" value="F:metal ion binding"/>
    <property type="evidence" value="ECO:0007669"/>
    <property type="project" value="UniProtKB-KW"/>
</dbReference>
<dbReference type="GO" id="GO:0016121">
    <property type="term" value="P:carotene catabolic process"/>
    <property type="evidence" value="ECO:0007669"/>
    <property type="project" value="TreeGrafter"/>
</dbReference>
<dbReference type="InterPro" id="IPR004294">
    <property type="entry name" value="Carotenoid_Oase"/>
</dbReference>
<dbReference type="PANTHER" id="PTHR10543">
    <property type="entry name" value="BETA-CAROTENE DIOXYGENASE"/>
    <property type="match status" value="1"/>
</dbReference>
<dbReference type="PANTHER" id="PTHR10543:SF89">
    <property type="entry name" value="CAROTENOID 9,10(9',10')-CLEAVAGE DIOXYGENASE 1"/>
    <property type="match status" value="1"/>
</dbReference>
<dbReference type="Pfam" id="PF03055">
    <property type="entry name" value="RPE65"/>
    <property type="match status" value="1"/>
</dbReference>
<keyword id="KW-0223">Dioxygenase</keyword>
<keyword id="KW-0408">Iron</keyword>
<keyword id="KW-0479">Metal-binding</keyword>
<keyword id="KW-0560">Oxidoreductase</keyword>
<keyword id="KW-1185">Reference proteome</keyword>
<protein>
    <recommendedName>
        <fullName>Carotenoid cleavage oxygenase</fullName>
        <shortName>CCO</shortName>
        <ecNumber>1.13.11.-</ecNumber>
    </recommendedName>
    <alternativeName>
        <fullName>Carotenoid 13,14/15,15'-oxygenase</fullName>
    </alternativeName>
</protein>
<evidence type="ECO:0000250" key="1"/>
<evidence type="ECO:0000305" key="2"/>
<gene>
    <name type="ordered locus">MT0683</name>
</gene>
<sequence>MTTAQAAESQNPYLEGFLAPVSTEVTATDLPVTGRIPEHLDGRYLRNGPNPVAEVDPATYHWFTGDAMVHGVALRDGKARWYRNRWVRTPAVCAALGEPISARPHPRTGIIEGGPNTNVLTHAGRTLALVEAGVVNYELTDELDTVGPCDFDGTLHGGYTAHPQRDPHTGELHAVSYSFARGHRVQYSVIGTDGHARRTVDIEVAGSPMMHSFSLTDNYVVIYDLPVTFDPMQVVPASVPRWLQRPARLVIQSVLGRVRIPDPIAALGNRMQGHSDRLPYAWNPSYPARVGVMPREGGNEDVRWFDIEPCYVYHPLNAYSECRNGAEVLVLDVVRYSRMFDRDRRGPGGDSRPSLDRWTINLATGAVTAECRDDRAQEFPRINETLVGGPHRFAYTVGIEGGFLVGAGAALSTPLYKQDCVTGSSTVASLDPDLLIGEMVFVPNPSARAEDDGILMGYGWHRGRDEGQLLLLDAQTLESIATVHLPQRVPMGFHGNWAPTT</sequence>